<protein>
    <recommendedName>
        <fullName evidence="1">Large ribosomal subunit protein uL30</fullName>
    </recommendedName>
    <alternativeName>
        <fullName evidence="2">50S ribosomal protein L30</fullName>
    </alternativeName>
</protein>
<reference key="1">
    <citation type="submission" date="2006-02" db="EMBL/GenBank/DDBJ databases">
        <title>Complete sequence of chromosome of Rhodoferax ferrireducens DSM 15236.</title>
        <authorList>
            <person name="Copeland A."/>
            <person name="Lucas S."/>
            <person name="Lapidus A."/>
            <person name="Barry K."/>
            <person name="Detter J.C."/>
            <person name="Glavina del Rio T."/>
            <person name="Hammon N."/>
            <person name="Israni S."/>
            <person name="Pitluck S."/>
            <person name="Brettin T."/>
            <person name="Bruce D."/>
            <person name="Han C."/>
            <person name="Tapia R."/>
            <person name="Gilna P."/>
            <person name="Kiss H."/>
            <person name="Schmutz J."/>
            <person name="Larimer F."/>
            <person name="Land M."/>
            <person name="Kyrpides N."/>
            <person name="Ivanova N."/>
            <person name="Richardson P."/>
        </authorList>
    </citation>
    <scope>NUCLEOTIDE SEQUENCE [LARGE SCALE GENOMIC DNA]</scope>
    <source>
        <strain>ATCC BAA-621 / DSM 15236 / T118</strain>
    </source>
</reference>
<name>RL30_ALBFT</name>
<evidence type="ECO:0000255" key="1">
    <source>
        <dbReference type="HAMAP-Rule" id="MF_01371"/>
    </source>
</evidence>
<evidence type="ECO:0000305" key="2"/>
<comment type="subunit">
    <text evidence="1">Part of the 50S ribosomal subunit.</text>
</comment>
<comment type="similarity">
    <text evidence="1">Belongs to the universal ribosomal protein uL30 family.</text>
</comment>
<accession>Q21QP1</accession>
<organism>
    <name type="scientific">Albidiferax ferrireducens (strain ATCC BAA-621 / DSM 15236 / T118)</name>
    <name type="common">Rhodoferax ferrireducens</name>
    <dbReference type="NCBI Taxonomy" id="338969"/>
    <lineage>
        <taxon>Bacteria</taxon>
        <taxon>Pseudomonadati</taxon>
        <taxon>Pseudomonadota</taxon>
        <taxon>Betaproteobacteria</taxon>
        <taxon>Burkholderiales</taxon>
        <taxon>Comamonadaceae</taxon>
        <taxon>Rhodoferax</taxon>
    </lineage>
</organism>
<proteinExistence type="inferred from homology"/>
<feature type="chain" id="PRO_0000273839" description="Large ribosomal subunit protein uL30">
    <location>
        <begin position="1"/>
        <end position="60"/>
    </location>
</feature>
<gene>
    <name evidence="1" type="primary">rpmD</name>
    <name type="ordered locus">Rfer_4225</name>
</gene>
<keyword id="KW-1185">Reference proteome</keyword>
<keyword id="KW-0687">Ribonucleoprotein</keyword>
<keyword id="KW-0689">Ribosomal protein</keyword>
<sequence length="60" mass="6765">MTTQQTIKVQLIRSPIGCQESHRATVRGLGLRKIRSTSELVDTPEVRGMINKISYLIKVL</sequence>
<dbReference type="EMBL" id="CP000267">
    <property type="protein sequence ID" value="ABD71912.1"/>
    <property type="molecule type" value="Genomic_DNA"/>
</dbReference>
<dbReference type="SMR" id="Q21QP1"/>
<dbReference type="STRING" id="338969.Rfer_4225"/>
<dbReference type="KEGG" id="rfr:Rfer_4225"/>
<dbReference type="eggNOG" id="COG1841">
    <property type="taxonomic scope" value="Bacteria"/>
</dbReference>
<dbReference type="HOGENOM" id="CLU_131047_1_4_4"/>
<dbReference type="OrthoDB" id="9812790at2"/>
<dbReference type="Proteomes" id="UP000008332">
    <property type="component" value="Chromosome"/>
</dbReference>
<dbReference type="GO" id="GO:0022625">
    <property type="term" value="C:cytosolic large ribosomal subunit"/>
    <property type="evidence" value="ECO:0007669"/>
    <property type="project" value="TreeGrafter"/>
</dbReference>
<dbReference type="GO" id="GO:0003735">
    <property type="term" value="F:structural constituent of ribosome"/>
    <property type="evidence" value="ECO:0007669"/>
    <property type="project" value="InterPro"/>
</dbReference>
<dbReference type="GO" id="GO:0006412">
    <property type="term" value="P:translation"/>
    <property type="evidence" value="ECO:0007669"/>
    <property type="project" value="UniProtKB-UniRule"/>
</dbReference>
<dbReference type="CDD" id="cd01658">
    <property type="entry name" value="Ribosomal_L30"/>
    <property type="match status" value="1"/>
</dbReference>
<dbReference type="FunFam" id="3.30.1390.20:FF:000001">
    <property type="entry name" value="50S ribosomal protein L30"/>
    <property type="match status" value="1"/>
</dbReference>
<dbReference type="Gene3D" id="3.30.1390.20">
    <property type="entry name" value="Ribosomal protein L30, ferredoxin-like fold domain"/>
    <property type="match status" value="1"/>
</dbReference>
<dbReference type="HAMAP" id="MF_01371_B">
    <property type="entry name" value="Ribosomal_uL30_B"/>
    <property type="match status" value="1"/>
</dbReference>
<dbReference type="InterPro" id="IPR036919">
    <property type="entry name" value="Ribo_uL30_ferredoxin-like_sf"/>
</dbReference>
<dbReference type="InterPro" id="IPR005996">
    <property type="entry name" value="Ribosomal_uL30_bac-type"/>
</dbReference>
<dbReference type="InterPro" id="IPR016082">
    <property type="entry name" value="Ribosomal_uL30_ferredoxin-like"/>
</dbReference>
<dbReference type="NCBIfam" id="TIGR01308">
    <property type="entry name" value="rpmD_bact"/>
    <property type="match status" value="1"/>
</dbReference>
<dbReference type="PANTHER" id="PTHR15892:SF2">
    <property type="entry name" value="LARGE RIBOSOMAL SUBUNIT PROTEIN UL30M"/>
    <property type="match status" value="1"/>
</dbReference>
<dbReference type="PANTHER" id="PTHR15892">
    <property type="entry name" value="MITOCHONDRIAL RIBOSOMAL PROTEIN L30"/>
    <property type="match status" value="1"/>
</dbReference>
<dbReference type="Pfam" id="PF00327">
    <property type="entry name" value="Ribosomal_L30"/>
    <property type="match status" value="1"/>
</dbReference>
<dbReference type="PIRSF" id="PIRSF002211">
    <property type="entry name" value="Ribosomal_L30_bac-type"/>
    <property type="match status" value="1"/>
</dbReference>
<dbReference type="SUPFAM" id="SSF55129">
    <property type="entry name" value="Ribosomal protein L30p/L7e"/>
    <property type="match status" value="1"/>
</dbReference>